<organism>
    <name type="scientific">Oryza sativa subsp. japonica</name>
    <name type="common">Rice</name>
    <dbReference type="NCBI Taxonomy" id="39947"/>
    <lineage>
        <taxon>Eukaryota</taxon>
        <taxon>Viridiplantae</taxon>
        <taxon>Streptophyta</taxon>
        <taxon>Embryophyta</taxon>
        <taxon>Tracheophyta</taxon>
        <taxon>Spermatophyta</taxon>
        <taxon>Magnoliopsida</taxon>
        <taxon>Liliopsida</taxon>
        <taxon>Poales</taxon>
        <taxon>Poaceae</taxon>
        <taxon>BOP clade</taxon>
        <taxon>Oryzoideae</taxon>
        <taxon>Oryzeae</taxon>
        <taxon>Oryzinae</taxon>
        <taxon>Oryza</taxon>
        <taxon>Oryza sativa</taxon>
    </lineage>
</organism>
<gene>
    <name type="ordered locus">Os08g0189500</name>
    <name type="ordered locus">LOC_Os08g09000</name>
    <name type="ORF">B1099H05.31</name>
    <name type="ORF">OsJ_025245</name>
    <name type="ORF">P0610E02.7</name>
</gene>
<comment type="function">
    <text evidence="3">Plays a role in broad-spectrum disease resistance. Probably has no oxalate oxidase activity even if the active site is conserved.</text>
</comment>
<comment type="subunit">
    <text evidence="1">Oligomer (believed to be a pentamer but probably hexamer).</text>
</comment>
<comment type="subcellular location">
    <subcellularLocation>
        <location evidence="1">Secreted</location>
        <location evidence="1">Extracellular space</location>
        <location evidence="1">Apoplast</location>
    </subcellularLocation>
</comment>
<comment type="miscellaneous">
    <text>Member of the 12 germin-like protein gene cluster located on chromosome 8 in the major-effect quantitative trait loci (QTL) for fungal blast resistance. Partial suppression of the 12 germin-like protein genes increases susceptibility to the fungal pathogens causing rice blast and sheath blight diseases.</text>
</comment>
<comment type="similarity">
    <text evidence="4">Belongs to the germin family.</text>
</comment>
<keyword id="KW-0052">Apoplast</keyword>
<keyword id="KW-1015">Disulfide bond</keyword>
<keyword id="KW-0325">Glycoprotein</keyword>
<keyword id="KW-0464">Manganese</keyword>
<keyword id="KW-0479">Metal-binding</keyword>
<keyword id="KW-1185">Reference proteome</keyword>
<keyword id="KW-0964">Secreted</keyword>
<keyword id="KW-0732">Signal</keyword>
<evidence type="ECO:0000250" key="1"/>
<evidence type="ECO:0000255" key="2"/>
<evidence type="ECO:0000269" key="3">
    <source>
    </source>
</evidence>
<evidence type="ECO:0000305" key="4"/>
<feature type="signal peptide" evidence="2">
    <location>
        <begin position="1"/>
        <end position="23"/>
    </location>
</feature>
<feature type="chain" id="PRO_0000365518" description="Germin-like protein 8-6">
    <location>
        <begin position="24"/>
        <end position="225"/>
    </location>
</feature>
<feature type="domain" description="Cupin type-1" evidence="2">
    <location>
        <begin position="63"/>
        <end position="213"/>
    </location>
</feature>
<feature type="binding site" evidence="1">
    <location>
        <position position="110"/>
    </location>
    <ligand>
        <name>Mn(2+)</name>
        <dbReference type="ChEBI" id="CHEBI:29035"/>
    </ligand>
</feature>
<feature type="binding site" evidence="1">
    <location>
        <position position="112"/>
    </location>
    <ligand>
        <name>Mn(2+)</name>
        <dbReference type="ChEBI" id="CHEBI:29035"/>
    </ligand>
</feature>
<feature type="binding site" evidence="1">
    <location>
        <position position="117"/>
    </location>
    <ligand>
        <name>Mn(2+)</name>
        <dbReference type="ChEBI" id="CHEBI:29035"/>
    </ligand>
</feature>
<feature type="binding site" evidence="1">
    <location>
        <position position="158"/>
    </location>
    <ligand>
        <name>Mn(2+)</name>
        <dbReference type="ChEBI" id="CHEBI:29035"/>
    </ligand>
</feature>
<feature type="glycosylation site" description="N-linked (GlcNAc...) asparagine" evidence="2">
    <location>
        <position position="77"/>
    </location>
</feature>
<feature type="glycosylation site" description="N-linked (GlcNAc...) asparagine" evidence="2">
    <location>
        <position position="136"/>
    </location>
</feature>
<feature type="disulfide bond" evidence="1">
    <location>
        <begin position="33"/>
        <end position="48"/>
    </location>
</feature>
<protein>
    <recommendedName>
        <fullName>Germin-like protein 8-6</fullName>
    </recommendedName>
</protein>
<sequence length="225" mass="24335">MASPSSLCLLTALLALVSWQTIASDPSPLQDFCVADEHSPVLVNGFACLDPKHVNADHFFKAAMLDTPRKTNKVGSNVTLINVMQIPGLNTLGISIARIDYAPLGQNPPHTHPRATEILTVLEGTLYVGFVTSNPNNTLFSKVLKKGDVFVFPVGLIHFQFNPNPHQPAVAIAALSSQNPGAITIANAVFGSKPPISDEVLAKAFQVEKGTIDWLQAQFWENNHY</sequence>
<reference key="1">
    <citation type="journal article" date="2005" name="Nature">
        <title>The map-based sequence of the rice genome.</title>
        <authorList>
            <consortium name="International rice genome sequencing project (IRGSP)"/>
        </authorList>
    </citation>
    <scope>NUCLEOTIDE SEQUENCE [LARGE SCALE GENOMIC DNA]</scope>
    <source>
        <strain>cv. Nipponbare</strain>
    </source>
</reference>
<reference key="2">
    <citation type="journal article" date="2008" name="Nucleic Acids Res.">
        <title>The rice annotation project database (RAP-DB): 2008 update.</title>
        <authorList>
            <consortium name="The rice annotation project (RAP)"/>
        </authorList>
    </citation>
    <scope>GENOME REANNOTATION</scope>
    <source>
        <strain>cv. Nipponbare</strain>
    </source>
</reference>
<reference key="3">
    <citation type="journal article" date="2013" name="Rice">
        <title>Improvement of the Oryza sativa Nipponbare reference genome using next generation sequence and optical map data.</title>
        <authorList>
            <person name="Kawahara Y."/>
            <person name="de la Bastide M."/>
            <person name="Hamilton J.P."/>
            <person name="Kanamori H."/>
            <person name="McCombie W.R."/>
            <person name="Ouyang S."/>
            <person name="Schwartz D.C."/>
            <person name="Tanaka T."/>
            <person name="Wu J."/>
            <person name="Zhou S."/>
            <person name="Childs K.L."/>
            <person name="Davidson R.M."/>
            <person name="Lin H."/>
            <person name="Quesada-Ocampo L."/>
            <person name="Vaillancourt B."/>
            <person name="Sakai H."/>
            <person name="Lee S.S."/>
            <person name="Kim J."/>
            <person name="Numa H."/>
            <person name="Itoh T."/>
            <person name="Buell C.R."/>
            <person name="Matsumoto T."/>
        </authorList>
    </citation>
    <scope>GENOME REANNOTATION</scope>
    <source>
        <strain>cv. Nipponbare</strain>
    </source>
</reference>
<reference key="4">
    <citation type="journal article" date="2005" name="PLoS Biol.">
        <title>The genomes of Oryza sativa: a history of duplications.</title>
        <authorList>
            <person name="Yu J."/>
            <person name="Wang J."/>
            <person name="Lin W."/>
            <person name="Li S."/>
            <person name="Li H."/>
            <person name="Zhou J."/>
            <person name="Ni P."/>
            <person name="Dong W."/>
            <person name="Hu S."/>
            <person name="Zeng C."/>
            <person name="Zhang J."/>
            <person name="Zhang Y."/>
            <person name="Li R."/>
            <person name="Xu Z."/>
            <person name="Li S."/>
            <person name="Li X."/>
            <person name="Zheng H."/>
            <person name="Cong L."/>
            <person name="Lin L."/>
            <person name="Yin J."/>
            <person name="Geng J."/>
            <person name="Li G."/>
            <person name="Shi J."/>
            <person name="Liu J."/>
            <person name="Lv H."/>
            <person name="Li J."/>
            <person name="Wang J."/>
            <person name="Deng Y."/>
            <person name="Ran L."/>
            <person name="Shi X."/>
            <person name="Wang X."/>
            <person name="Wu Q."/>
            <person name="Li C."/>
            <person name="Ren X."/>
            <person name="Wang J."/>
            <person name="Wang X."/>
            <person name="Li D."/>
            <person name="Liu D."/>
            <person name="Zhang X."/>
            <person name="Ji Z."/>
            <person name="Zhao W."/>
            <person name="Sun Y."/>
            <person name="Zhang Z."/>
            <person name="Bao J."/>
            <person name="Han Y."/>
            <person name="Dong L."/>
            <person name="Ji J."/>
            <person name="Chen P."/>
            <person name="Wu S."/>
            <person name="Liu J."/>
            <person name="Xiao Y."/>
            <person name="Bu D."/>
            <person name="Tan J."/>
            <person name="Yang L."/>
            <person name="Ye C."/>
            <person name="Zhang J."/>
            <person name="Xu J."/>
            <person name="Zhou Y."/>
            <person name="Yu Y."/>
            <person name="Zhang B."/>
            <person name="Zhuang S."/>
            <person name="Wei H."/>
            <person name="Liu B."/>
            <person name="Lei M."/>
            <person name="Yu H."/>
            <person name="Li Y."/>
            <person name="Xu H."/>
            <person name="Wei S."/>
            <person name="He X."/>
            <person name="Fang L."/>
            <person name="Zhang Z."/>
            <person name="Zhang Y."/>
            <person name="Huang X."/>
            <person name="Su Z."/>
            <person name="Tong W."/>
            <person name="Li J."/>
            <person name="Tong Z."/>
            <person name="Li S."/>
            <person name="Ye J."/>
            <person name="Wang L."/>
            <person name="Fang L."/>
            <person name="Lei T."/>
            <person name="Chen C.-S."/>
            <person name="Chen H.-C."/>
            <person name="Xu Z."/>
            <person name="Li H."/>
            <person name="Huang H."/>
            <person name="Zhang F."/>
            <person name="Xu H."/>
            <person name="Li N."/>
            <person name="Zhao C."/>
            <person name="Li S."/>
            <person name="Dong L."/>
            <person name="Huang Y."/>
            <person name="Li L."/>
            <person name="Xi Y."/>
            <person name="Qi Q."/>
            <person name="Li W."/>
            <person name="Zhang B."/>
            <person name="Hu W."/>
            <person name="Zhang Y."/>
            <person name="Tian X."/>
            <person name="Jiao Y."/>
            <person name="Liang X."/>
            <person name="Jin J."/>
            <person name="Gao L."/>
            <person name="Zheng W."/>
            <person name="Hao B."/>
            <person name="Liu S.-M."/>
            <person name="Wang W."/>
            <person name="Yuan L."/>
            <person name="Cao M."/>
            <person name="McDermott J."/>
            <person name="Samudrala R."/>
            <person name="Wang J."/>
            <person name="Wong G.K.-S."/>
            <person name="Yang H."/>
        </authorList>
    </citation>
    <scope>NUCLEOTIDE SEQUENCE [LARGE SCALE GENOMIC DNA]</scope>
    <source>
        <strain>cv. Nipponbare</strain>
    </source>
</reference>
<reference key="5">
    <citation type="submission" date="2006-10" db="EMBL/GenBank/DDBJ databases">
        <title>Oryza sativa full length cDNA.</title>
        <authorList>
            <consortium name="The rice full-length cDNA consortium"/>
        </authorList>
    </citation>
    <scope>NUCLEOTIDE SEQUENCE [LARGE SCALE MRNA]</scope>
    <source>
        <strain>cv. Nipponbare</strain>
    </source>
</reference>
<reference key="6">
    <citation type="journal article" date="2009" name="Plant Physiol.">
        <title>A germin-like protein gene family functions as a complex quantitative trait locus conferring broad-spectrum disease resistance in rice.</title>
        <authorList>
            <person name="Manosalva P.M."/>
            <person name="Davidson R.M."/>
            <person name="Liu B."/>
            <person name="Zhu X."/>
            <person name="Hulbert S.H."/>
            <person name="Leung H."/>
            <person name="Leach J.E."/>
        </authorList>
    </citation>
    <scope>FUNCTION</scope>
</reference>
<dbReference type="EMBL" id="AP005505">
    <property type="protein sequence ID" value="BAD05734.1"/>
    <property type="molecule type" value="Genomic_DNA"/>
</dbReference>
<dbReference type="EMBL" id="AP005531">
    <property type="protein sequence ID" value="BAD05773.1"/>
    <property type="molecule type" value="Genomic_DNA"/>
</dbReference>
<dbReference type="EMBL" id="AP008214">
    <property type="protein sequence ID" value="BAF23074.1"/>
    <property type="molecule type" value="Genomic_DNA"/>
</dbReference>
<dbReference type="EMBL" id="AP014964">
    <property type="protein sequence ID" value="BAT04153.1"/>
    <property type="molecule type" value="Genomic_DNA"/>
</dbReference>
<dbReference type="EMBL" id="CM000145">
    <property type="protein sequence ID" value="EAZ41762.1"/>
    <property type="molecule type" value="Genomic_DNA"/>
</dbReference>
<dbReference type="EMBL" id="AK243135">
    <property type="protein sequence ID" value="BAH01463.1"/>
    <property type="molecule type" value="mRNA"/>
</dbReference>
<dbReference type="RefSeq" id="XP_015650204.1">
    <property type="nucleotide sequence ID" value="XM_015794718.1"/>
</dbReference>
<dbReference type="SMR" id="Q6YZA4"/>
<dbReference type="FunCoup" id="Q6YZA4">
    <property type="interactions" value="40"/>
</dbReference>
<dbReference type="STRING" id="39947.Q6YZA4"/>
<dbReference type="PaxDb" id="39947-Q6YZA4"/>
<dbReference type="EnsemblPlants" id="Os08t0189500-01">
    <property type="protein sequence ID" value="Os08t0189500-01"/>
    <property type="gene ID" value="Os08g0189500"/>
</dbReference>
<dbReference type="Gramene" id="Os08t0189500-01">
    <property type="protein sequence ID" value="Os08t0189500-01"/>
    <property type="gene ID" value="Os08g0189500"/>
</dbReference>
<dbReference type="KEGG" id="dosa:Os08g0189500"/>
<dbReference type="eggNOG" id="ENOG502QQ4A">
    <property type="taxonomic scope" value="Eukaryota"/>
</dbReference>
<dbReference type="HOGENOM" id="CLU_015790_0_0_1"/>
<dbReference type="InParanoid" id="Q6YZA4"/>
<dbReference type="OMA" id="CNTIAIG"/>
<dbReference type="OrthoDB" id="1850619at2759"/>
<dbReference type="Proteomes" id="UP000000763">
    <property type="component" value="Chromosome 8"/>
</dbReference>
<dbReference type="Proteomes" id="UP000007752">
    <property type="component" value="Chromosome 8"/>
</dbReference>
<dbReference type="Proteomes" id="UP000059680">
    <property type="component" value="Chromosome 8"/>
</dbReference>
<dbReference type="GO" id="GO:0048046">
    <property type="term" value="C:apoplast"/>
    <property type="evidence" value="ECO:0007669"/>
    <property type="project" value="UniProtKB-SubCell"/>
</dbReference>
<dbReference type="GO" id="GO:0030145">
    <property type="term" value="F:manganese ion binding"/>
    <property type="evidence" value="ECO:0007669"/>
    <property type="project" value="InterPro"/>
</dbReference>
<dbReference type="CDD" id="cd02241">
    <property type="entry name" value="cupin_OxOx"/>
    <property type="match status" value="1"/>
</dbReference>
<dbReference type="FunFam" id="2.60.120.10:FF:000005">
    <property type="entry name" value="Germin-like protein subfamily 1 member 8"/>
    <property type="match status" value="1"/>
</dbReference>
<dbReference type="Gene3D" id="2.60.120.10">
    <property type="entry name" value="Jelly Rolls"/>
    <property type="match status" value="1"/>
</dbReference>
<dbReference type="InterPro" id="IPR006045">
    <property type="entry name" value="Cupin_1"/>
</dbReference>
<dbReference type="InterPro" id="IPR001929">
    <property type="entry name" value="Germin"/>
</dbReference>
<dbReference type="InterPro" id="IPR019780">
    <property type="entry name" value="Germin_Mn-BS"/>
</dbReference>
<dbReference type="InterPro" id="IPR014710">
    <property type="entry name" value="RmlC-like_jellyroll"/>
</dbReference>
<dbReference type="InterPro" id="IPR011051">
    <property type="entry name" value="RmlC_Cupin_sf"/>
</dbReference>
<dbReference type="PANTHER" id="PTHR31238">
    <property type="entry name" value="GERMIN-LIKE PROTEIN SUBFAMILY 3 MEMBER 3"/>
    <property type="match status" value="1"/>
</dbReference>
<dbReference type="Pfam" id="PF00190">
    <property type="entry name" value="Cupin_1"/>
    <property type="match status" value="1"/>
</dbReference>
<dbReference type="PRINTS" id="PR00325">
    <property type="entry name" value="GERMIN"/>
</dbReference>
<dbReference type="SMART" id="SM00835">
    <property type="entry name" value="Cupin_1"/>
    <property type="match status" value="1"/>
</dbReference>
<dbReference type="SUPFAM" id="SSF51182">
    <property type="entry name" value="RmlC-like cupins"/>
    <property type="match status" value="1"/>
</dbReference>
<dbReference type="PROSITE" id="PS00725">
    <property type="entry name" value="GERMIN"/>
    <property type="match status" value="1"/>
</dbReference>
<proteinExistence type="evidence at transcript level"/>
<accession>Q6YZA4</accession>
<accession>A0A0P0XCQ7</accession>
<name>GL86_ORYSJ</name>